<proteinExistence type="inferred from homology"/>
<sequence>MFNSFQQQGTIQPQGTGYYPTQQGQQGQQGQQGQQGQQGQQGQQQQSFQSQPPFNSYVQQPNAGIGGFPQGQSSFGNTSQMTNQPSSGFTSGQYAGGSNANSNLFNQSSQQFGGVGNNNVNVNQSSDPSSLLPQGGSYNNAGLQRPQLQPVQSVQSVHSMHSLGPAQTMSSINPIQSQTGDYYGNALSQQQSRTSLMSTSSQMGGNQLYDTNSQILQPQQQQQQQQQNIQVTAPLQQQSTGLYSSASQPAQAANLQPQQTGFYSQQPLQPQQTGFYAQQSQVPLEPLKPTATGFVNSFANNGINNDIKIPTMRLSFITAQDQAKFETLFRSRVSKGSNTISGDNCRAILMKSGLQPKQLAKIWTLCDTSKAGELLFPEFALAMHLVNEVLQGDSIPYELDIKSKNEVNSFIDAINMSIVSGSTEEPAKQATPFDSLFTNGLSVLQPQATGMIPATSFGVPLQNQMTGGMLNPQATGMMPQTSFGMPMQVTGGPLLSQTTGGALQPQTTGFMPSTSFGMPLQTQITGGAMMPNLQPQTTGSMMPNLQPQTTGSMMPNLQPQTTGSMMPNLQSQTTGSMMPNLQSQMTGSMGVGTTSFGMQPQATGNISLQPNPTGFLPVSNFNPTAPLTAQKTGFGNNEIYSQRNFGSSLGQAEEDSISTEEKSLFYKIFETYDSQKKGLLDSPTAVEIFRKSGLNRSDLEHIWNLCDINNRGQLSKQEFALGMHLVYRKLNGKILPNRLPPSLIPSSNKILDNVKNQLKVASTSNDTKKAPSRTDGLSYKNNDDENILPSFRNRRKNYSTNGTSSSSLDNTPRGSPVTVSGANVSSDTGVTTAVTTSSAPVAPVASAVVKDGRIDMLQKSIREKRGQLEAEISRNRRMLNQSAENRENDMRMIGSLKDKIANVPHILYTKNSSIPDDLNRRIDTIVSRIPVLFSEIADIEFAISNSKIELYKLQNPSSIIGSGPHGEITDEDRKKARSKALLKSRMAALTGKAEEAGNSIEEEEARYNKAVANIRNESRKNRGIIGDIRGSISELSASLMSTLTGGAAGQNTSEFEKWEFGVGLEKEVRTFIETLKSGGILSGSSLSTETNLNDKEDERVQYLKDQAQRKMEQKLAELGINKPAESPSQQSLSSPSQMEAQATPVKSPFQETQHADERSEDSEDEEEKRLREELERIKLKKKADKEKRLAELRRQVQDAQAESDDGFSSSVSGSNNGNVLAPQVEGTVGHVEYPAVPSAANPVSSVSASMSGSSTPVQGTSAAARNPFFKSTDSSNSTSGLSDLKAAEAQRRSQRGLDDDADAWSDDEPSPVAPAPVAPAPVAPAPVAPAPVAPAPVAPAPVAPAPVAPAPAPVAPSPVAPVPVAPSPVAPAPVAPSPVAPVPVAPSPAAPQPSNLPPVPIAPPLPQVQGVPQPVVPLAPPLPQVKQEEQGNFLAPPPSLPHMDNIQNSQNLDSHSDQDDVLSIPDSVASEDELGDEPGLPPSGIPPPPPLP</sequence>
<dbReference type="EMBL" id="DS480526">
    <property type="protein sequence ID" value="EDO14652.1"/>
    <property type="molecule type" value="Genomic_DNA"/>
</dbReference>
<dbReference type="RefSeq" id="XP_001642510.1">
    <property type="nucleotide sequence ID" value="XM_001642460.1"/>
</dbReference>
<dbReference type="SMR" id="A7TSV7"/>
<dbReference type="FunCoup" id="A7TSV7">
    <property type="interactions" value="77"/>
</dbReference>
<dbReference type="STRING" id="436907.A7TSV7"/>
<dbReference type="GeneID" id="5542672"/>
<dbReference type="KEGG" id="vpo:Kpol_328p4"/>
<dbReference type="eggNOG" id="KOG0998">
    <property type="taxonomic scope" value="Eukaryota"/>
</dbReference>
<dbReference type="HOGENOM" id="CLU_006042_0_0_1"/>
<dbReference type="InParanoid" id="A7TSV7"/>
<dbReference type="OMA" id="GMPGQWG"/>
<dbReference type="OrthoDB" id="2015333at2759"/>
<dbReference type="PhylomeDB" id="A7TSV7"/>
<dbReference type="Proteomes" id="UP000000267">
    <property type="component" value="Unassembled WGS sequence"/>
</dbReference>
<dbReference type="GO" id="GO:0030479">
    <property type="term" value="C:actin cortical patch"/>
    <property type="evidence" value="ECO:0007669"/>
    <property type="project" value="UniProtKB-SubCell"/>
</dbReference>
<dbReference type="GO" id="GO:1990964">
    <property type="term" value="C:actin cytoskeleton-regulatory complex"/>
    <property type="evidence" value="ECO:0007669"/>
    <property type="project" value="EnsemblFungi"/>
</dbReference>
<dbReference type="GO" id="GO:0010008">
    <property type="term" value="C:endosome membrane"/>
    <property type="evidence" value="ECO:0007669"/>
    <property type="project" value="UniProtKB-SubCell"/>
</dbReference>
<dbReference type="GO" id="GO:0005634">
    <property type="term" value="C:nucleus"/>
    <property type="evidence" value="ECO:0007669"/>
    <property type="project" value="EnsemblFungi"/>
</dbReference>
<dbReference type="GO" id="GO:0005886">
    <property type="term" value="C:plasma membrane"/>
    <property type="evidence" value="ECO:0007669"/>
    <property type="project" value="UniProtKB-SubCell"/>
</dbReference>
<dbReference type="GO" id="GO:0003779">
    <property type="term" value="F:actin binding"/>
    <property type="evidence" value="ECO:0007669"/>
    <property type="project" value="UniProtKB-KW"/>
</dbReference>
<dbReference type="GO" id="GO:0071933">
    <property type="term" value="F:Arp2/3 complex binding"/>
    <property type="evidence" value="ECO:0007669"/>
    <property type="project" value="EnsemblFungi"/>
</dbReference>
<dbReference type="GO" id="GO:0005509">
    <property type="term" value="F:calcium ion binding"/>
    <property type="evidence" value="ECO:0007669"/>
    <property type="project" value="InterPro"/>
</dbReference>
<dbReference type="GO" id="GO:0000147">
    <property type="term" value="P:actin cortical patch assembly"/>
    <property type="evidence" value="ECO:0007669"/>
    <property type="project" value="EnsemblFungi"/>
</dbReference>
<dbReference type="GO" id="GO:0007120">
    <property type="term" value="P:axial cellular bud site selection"/>
    <property type="evidence" value="ECO:0007669"/>
    <property type="project" value="EnsemblFungi"/>
</dbReference>
<dbReference type="GO" id="GO:0007121">
    <property type="term" value="P:bipolar cellular bud site selection"/>
    <property type="evidence" value="ECO:0007669"/>
    <property type="project" value="EnsemblFungi"/>
</dbReference>
<dbReference type="GO" id="GO:0071555">
    <property type="term" value="P:cell wall organization"/>
    <property type="evidence" value="ECO:0007669"/>
    <property type="project" value="EnsemblFungi"/>
</dbReference>
<dbReference type="GO" id="GO:0006897">
    <property type="term" value="P:endocytosis"/>
    <property type="evidence" value="ECO:0007669"/>
    <property type="project" value="UniProtKB-KW"/>
</dbReference>
<dbReference type="GO" id="GO:0016197">
    <property type="term" value="P:endosomal transport"/>
    <property type="evidence" value="ECO:0007669"/>
    <property type="project" value="TreeGrafter"/>
</dbReference>
<dbReference type="GO" id="GO:2000601">
    <property type="term" value="P:positive regulation of Arp2/3 complex-mediated actin nucleation"/>
    <property type="evidence" value="ECO:0007669"/>
    <property type="project" value="EnsemblFungi"/>
</dbReference>
<dbReference type="GO" id="GO:0061709">
    <property type="term" value="P:reticulophagy"/>
    <property type="evidence" value="ECO:0007669"/>
    <property type="project" value="EnsemblFungi"/>
</dbReference>
<dbReference type="CDD" id="cd00052">
    <property type="entry name" value="EH"/>
    <property type="match status" value="2"/>
</dbReference>
<dbReference type="FunFam" id="1.10.238.10:FF:000349">
    <property type="entry name" value="Actin cytoskeleton-regulatory complex protein PAN1"/>
    <property type="match status" value="1"/>
</dbReference>
<dbReference type="Gene3D" id="1.10.238.10">
    <property type="entry name" value="EF-hand"/>
    <property type="match status" value="2"/>
</dbReference>
<dbReference type="InterPro" id="IPR013182">
    <property type="entry name" value="DUF1720"/>
</dbReference>
<dbReference type="InterPro" id="IPR011992">
    <property type="entry name" value="EF-hand-dom_pair"/>
</dbReference>
<dbReference type="InterPro" id="IPR002048">
    <property type="entry name" value="EF_hand_dom"/>
</dbReference>
<dbReference type="InterPro" id="IPR000261">
    <property type="entry name" value="EH_dom"/>
</dbReference>
<dbReference type="PANTHER" id="PTHR11216:SF173">
    <property type="entry name" value="ACTIN CYTOSKELETON-REGULATORY COMPLEX PROTEIN PAN1"/>
    <property type="match status" value="1"/>
</dbReference>
<dbReference type="PANTHER" id="PTHR11216">
    <property type="entry name" value="EH DOMAIN"/>
    <property type="match status" value="1"/>
</dbReference>
<dbReference type="Pfam" id="PF08226">
    <property type="entry name" value="DUF1720"/>
    <property type="match status" value="4"/>
</dbReference>
<dbReference type="Pfam" id="PF12763">
    <property type="entry name" value="EH"/>
    <property type="match status" value="2"/>
</dbReference>
<dbReference type="SMART" id="SM00054">
    <property type="entry name" value="EFh"/>
    <property type="match status" value="2"/>
</dbReference>
<dbReference type="SMART" id="SM00027">
    <property type="entry name" value="EH"/>
    <property type="match status" value="2"/>
</dbReference>
<dbReference type="SUPFAM" id="SSF47473">
    <property type="entry name" value="EF-hand"/>
    <property type="match status" value="2"/>
</dbReference>
<dbReference type="PROSITE" id="PS50222">
    <property type="entry name" value="EF_HAND_2"/>
    <property type="match status" value="2"/>
</dbReference>
<dbReference type="PROSITE" id="PS50031">
    <property type="entry name" value="EH"/>
    <property type="match status" value="2"/>
</dbReference>
<reference key="1">
    <citation type="journal article" date="2007" name="Proc. Natl. Acad. Sci. U.S.A.">
        <title>Independent sorting-out of thousands of duplicated gene pairs in two yeast species descended from a whole-genome duplication.</title>
        <authorList>
            <person name="Scannell D.R."/>
            <person name="Frank A.C."/>
            <person name="Conant G.C."/>
            <person name="Byrne K.P."/>
            <person name="Woolfit M."/>
            <person name="Wolfe K.H."/>
        </authorList>
    </citation>
    <scope>NUCLEOTIDE SEQUENCE [LARGE SCALE GENOMIC DNA]</scope>
    <source>
        <strain>ATCC 22028 / DSM 70294 / BCRC 21397 / CBS 2163 / NBRC 10782 / NRRL Y-8283 / UCD 57-17</strain>
    </source>
</reference>
<accession>A7TSV7</accession>
<feature type="chain" id="PRO_0000349486" description="Actin cytoskeleton-regulatory complex protein PAN1">
    <location>
        <begin position="1"/>
        <end position="1492"/>
    </location>
</feature>
<feature type="domain" description="EH 1" evidence="3">
    <location>
        <begin position="321"/>
        <end position="410"/>
    </location>
</feature>
<feature type="domain" description="EF-hand 1" evidence="4">
    <location>
        <begin position="354"/>
        <end position="389"/>
    </location>
</feature>
<feature type="domain" description="EH 2" evidence="3">
    <location>
        <begin position="661"/>
        <end position="750"/>
    </location>
</feature>
<feature type="domain" description="EF-hand 2" evidence="4">
    <location>
        <begin position="694"/>
        <end position="729"/>
    </location>
</feature>
<feature type="region of interest" description="Disordered" evidence="5">
    <location>
        <begin position="1"/>
        <end position="175"/>
    </location>
</feature>
<feature type="region of interest" description="Disordered" evidence="5">
    <location>
        <begin position="240"/>
        <end position="259"/>
    </location>
</feature>
<feature type="region of interest" description="Disordered" evidence="5">
    <location>
        <begin position="761"/>
        <end position="828"/>
    </location>
</feature>
<feature type="region of interest" description="Disordered" evidence="5">
    <location>
        <begin position="1120"/>
        <end position="1225"/>
    </location>
</feature>
<feature type="region of interest" description="Disordered" evidence="5">
    <location>
        <begin position="1237"/>
        <end position="1492"/>
    </location>
</feature>
<feature type="coiled-coil region" evidence="2">
    <location>
        <begin position="982"/>
        <end position="1022"/>
    </location>
</feature>
<feature type="coiled-coil region" evidence="2">
    <location>
        <begin position="1098"/>
        <end position="1207"/>
    </location>
</feature>
<feature type="compositionally biased region" description="Low complexity" evidence="5">
    <location>
        <begin position="1"/>
        <end position="54"/>
    </location>
</feature>
<feature type="compositionally biased region" description="Polar residues" evidence="5">
    <location>
        <begin position="70"/>
        <end position="104"/>
    </location>
</feature>
<feature type="compositionally biased region" description="Low complexity" evidence="5">
    <location>
        <begin position="105"/>
        <end position="126"/>
    </location>
</feature>
<feature type="compositionally biased region" description="Polar residues" evidence="5">
    <location>
        <begin position="127"/>
        <end position="142"/>
    </location>
</feature>
<feature type="compositionally biased region" description="Low complexity" evidence="5">
    <location>
        <begin position="146"/>
        <end position="163"/>
    </location>
</feature>
<feature type="compositionally biased region" description="Polar residues" evidence="5">
    <location>
        <begin position="165"/>
        <end position="175"/>
    </location>
</feature>
<feature type="compositionally biased region" description="Low complexity" evidence="5">
    <location>
        <begin position="244"/>
        <end position="259"/>
    </location>
</feature>
<feature type="compositionally biased region" description="Polar residues" evidence="5">
    <location>
        <begin position="798"/>
        <end position="823"/>
    </location>
</feature>
<feature type="compositionally biased region" description="Low complexity" evidence="5">
    <location>
        <begin position="1126"/>
        <end position="1137"/>
    </location>
</feature>
<feature type="compositionally biased region" description="Basic and acidic residues" evidence="5">
    <location>
        <begin position="1167"/>
        <end position="1196"/>
    </location>
</feature>
<feature type="compositionally biased region" description="Low complexity" evidence="5">
    <location>
        <begin position="1206"/>
        <end position="1219"/>
    </location>
</feature>
<feature type="compositionally biased region" description="Low complexity" evidence="5">
    <location>
        <begin position="1237"/>
        <end position="1257"/>
    </location>
</feature>
<feature type="compositionally biased region" description="Low complexity" evidence="5">
    <location>
        <begin position="1271"/>
        <end position="1284"/>
    </location>
</feature>
<feature type="compositionally biased region" description="Basic and acidic residues" evidence="5">
    <location>
        <begin position="1285"/>
        <end position="1298"/>
    </location>
</feature>
<feature type="compositionally biased region" description="Acidic residues" evidence="5">
    <location>
        <begin position="1299"/>
        <end position="1309"/>
    </location>
</feature>
<feature type="compositionally biased region" description="Pro residues" evidence="5">
    <location>
        <begin position="1311"/>
        <end position="1406"/>
    </location>
</feature>
<feature type="compositionally biased region" description="Pro residues" evidence="5">
    <location>
        <begin position="1414"/>
        <end position="1423"/>
    </location>
</feature>
<feature type="compositionally biased region" description="Pro residues" evidence="5">
    <location>
        <begin position="1479"/>
        <end position="1492"/>
    </location>
</feature>
<organism>
    <name type="scientific">Vanderwaltozyma polyspora (strain ATCC 22028 / DSM 70294 / BCRC 21397 / CBS 2163 / NBRC 10782 / NRRL Y-8283 / UCD 57-17)</name>
    <name type="common">Kluyveromyces polysporus</name>
    <dbReference type="NCBI Taxonomy" id="436907"/>
    <lineage>
        <taxon>Eukaryota</taxon>
        <taxon>Fungi</taxon>
        <taxon>Dikarya</taxon>
        <taxon>Ascomycota</taxon>
        <taxon>Saccharomycotina</taxon>
        <taxon>Saccharomycetes</taxon>
        <taxon>Saccharomycetales</taxon>
        <taxon>Saccharomycetaceae</taxon>
        <taxon>Vanderwaltozyma</taxon>
    </lineage>
</organism>
<gene>
    <name type="primary">PAN1</name>
    <name type="ORF">Kpol_328p4</name>
</gene>
<protein>
    <recommendedName>
        <fullName>Actin cytoskeleton-regulatory complex protein PAN1</fullName>
    </recommendedName>
</protein>
<keyword id="KW-0009">Actin-binding</keyword>
<keyword id="KW-1003">Cell membrane</keyword>
<keyword id="KW-0175">Coiled coil</keyword>
<keyword id="KW-0963">Cytoplasm</keyword>
<keyword id="KW-0206">Cytoskeleton</keyword>
<keyword id="KW-0254">Endocytosis</keyword>
<keyword id="KW-0967">Endosome</keyword>
<keyword id="KW-0472">Membrane</keyword>
<keyword id="KW-1185">Reference proteome</keyword>
<keyword id="KW-0677">Repeat</keyword>
<name>PAN1_VANPO</name>
<comment type="function">
    <text evidence="1">Component of the PAN1 actin cytoskeleton-regulatory complex required for the internalization of endosomes during actin-coupled endocytosis. The complex links the site of endocytosis to the cell membrane-associated actin cytoskeleton. Mediates uptake of external molecules and vacuolar degradation of plasma membrane proteins. Plays a role in the proper organization of the cell membrane-associated actin cytoskeleton and promotes its destabilization (By similarity).</text>
</comment>
<comment type="subunit">
    <text evidence="1">Component of the PAN1 actin cytoskeleton-regulatory complex.</text>
</comment>
<comment type="subcellular location">
    <subcellularLocation>
        <location evidence="1">Cell membrane</location>
        <topology evidence="1">Peripheral membrane protein</topology>
        <orientation evidence="1">Cytoplasmic side</orientation>
    </subcellularLocation>
    <subcellularLocation>
        <location evidence="1">Endosome membrane</location>
        <topology evidence="1">Peripheral membrane protein</topology>
        <orientation evidence="1">Cytoplasmic side</orientation>
    </subcellularLocation>
    <subcellularLocation>
        <location evidence="1">Cytoplasm</location>
        <location evidence="1">Cytoskeleton</location>
        <location evidence="1">Actin patch</location>
    </subcellularLocation>
    <text evidence="1">Cytoplasmic and cortical actin patches.</text>
</comment>
<comment type="similarity">
    <text evidence="6">Belongs to the PAN1 family.</text>
</comment>
<evidence type="ECO:0000250" key="1"/>
<evidence type="ECO:0000255" key="2"/>
<evidence type="ECO:0000255" key="3">
    <source>
        <dbReference type="PROSITE-ProRule" id="PRU00077"/>
    </source>
</evidence>
<evidence type="ECO:0000255" key="4">
    <source>
        <dbReference type="PROSITE-ProRule" id="PRU00448"/>
    </source>
</evidence>
<evidence type="ECO:0000256" key="5">
    <source>
        <dbReference type="SAM" id="MobiDB-lite"/>
    </source>
</evidence>
<evidence type="ECO:0000305" key="6"/>